<accession>Q06004</accession>
<accession>Q45615</accession>
<proteinExistence type="evidence at protein level"/>
<organism>
    <name type="scientific">Bacillus subtilis (strain 168)</name>
    <dbReference type="NCBI Taxonomy" id="224308"/>
    <lineage>
        <taxon>Bacteria</taxon>
        <taxon>Bacillati</taxon>
        <taxon>Bacillota</taxon>
        <taxon>Bacilli</taxon>
        <taxon>Bacillales</taxon>
        <taxon>Bacillaceae</taxon>
        <taxon>Bacillus</taxon>
    </lineage>
</organism>
<reference key="1">
    <citation type="journal article" date="1992" name="J. Biol. Chem.">
        <title>Sorbitol dehydrogenase from Bacillus subtilis. Purification, characterization, and gene cloning.</title>
        <authorList>
            <person name="Ng K."/>
            <person name="Ye R."/>
            <person name="Wu X.-C."/>
            <person name="Wong S.-L."/>
        </authorList>
    </citation>
    <scope>NUCLEOTIDE SEQUENCE [GENOMIC DNA]</scope>
    <scope>PROTEIN SEQUENCE OF 2-32</scope>
    <scope>FUNCTION</scope>
    <scope>CATALYTIC ACTIVITY</scope>
    <scope>SUBSTRATE SPECIFICITY</scope>
    <scope>BIOPHYSICOCHEMICAL PROPERTIES</scope>
    <scope>SUBUNIT</scope>
    <scope>COFACTOR</scope>
    <source>
        <strain>168</strain>
    </source>
</reference>
<reference key="2">
    <citation type="journal article" date="1997" name="Nature">
        <title>The complete genome sequence of the Gram-positive bacterium Bacillus subtilis.</title>
        <authorList>
            <person name="Kunst F."/>
            <person name="Ogasawara N."/>
            <person name="Moszer I."/>
            <person name="Albertini A.M."/>
            <person name="Alloni G."/>
            <person name="Azevedo V."/>
            <person name="Bertero M.G."/>
            <person name="Bessieres P."/>
            <person name="Bolotin A."/>
            <person name="Borchert S."/>
            <person name="Borriss R."/>
            <person name="Boursier L."/>
            <person name="Brans A."/>
            <person name="Braun M."/>
            <person name="Brignell S.C."/>
            <person name="Bron S."/>
            <person name="Brouillet S."/>
            <person name="Bruschi C.V."/>
            <person name="Caldwell B."/>
            <person name="Capuano V."/>
            <person name="Carter N.M."/>
            <person name="Choi S.-K."/>
            <person name="Codani J.-J."/>
            <person name="Connerton I.F."/>
            <person name="Cummings N.J."/>
            <person name="Daniel R.A."/>
            <person name="Denizot F."/>
            <person name="Devine K.M."/>
            <person name="Duesterhoeft A."/>
            <person name="Ehrlich S.D."/>
            <person name="Emmerson P.T."/>
            <person name="Entian K.-D."/>
            <person name="Errington J."/>
            <person name="Fabret C."/>
            <person name="Ferrari E."/>
            <person name="Foulger D."/>
            <person name="Fritz C."/>
            <person name="Fujita M."/>
            <person name="Fujita Y."/>
            <person name="Fuma S."/>
            <person name="Galizzi A."/>
            <person name="Galleron N."/>
            <person name="Ghim S.-Y."/>
            <person name="Glaser P."/>
            <person name="Goffeau A."/>
            <person name="Golightly E.J."/>
            <person name="Grandi G."/>
            <person name="Guiseppi G."/>
            <person name="Guy B.J."/>
            <person name="Haga K."/>
            <person name="Haiech J."/>
            <person name="Harwood C.R."/>
            <person name="Henaut A."/>
            <person name="Hilbert H."/>
            <person name="Holsappel S."/>
            <person name="Hosono S."/>
            <person name="Hullo M.-F."/>
            <person name="Itaya M."/>
            <person name="Jones L.-M."/>
            <person name="Joris B."/>
            <person name="Karamata D."/>
            <person name="Kasahara Y."/>
            <person name="Klaerr-Blanchard M."/>
            <person name="Klein C."/>
            <person name="Kobayashi Y."/>
            <person name="Koetter P."/>
            <person name="Koningstein G."/>
            <person name="Krogh S."/>
            <person name="Kumano M."/>
            <person name="Kurita K."/>
            <person name="Lapidus A."/>
            <person name="Lardinois S."/>
            <person name="Lauber J."/>
            <person name="Lazarevic V."/>
            <person name="Lee S.-M."/>
            <person name="Levine A."/>
            <person name="Liu H."/>
            <person name="Masuda S."/>
            <person name="Mauel C."/>
            <person name="Medigue C."/>
            <person name="Medina N."/>
            <person name="Mellado R.P."/>
            <person name="Mizuno M."/>
            <person name="Moestl D."/>
            <person name="Nakai S."/>
            <person name="Noback M."/>
            <person name="Noone D."/>
            <person name="O'Reilly M."/>
            <person name="Ogawa K."/>
            <person name="Ogiwara A."/>
            <person name="Oudega B."/>
            <person name="Park S.-H."/>
            <person name="Parro V."/>
            <person name="Pohl T.M."/>
            <person name="Portetelle D."/>
            <person name="Porwollik S."/>
            <person name="Prescott A.M."/>
            <person name="Presecan E."/>
            <person name="Pujic P."/>
            <person name="Purnelle B."/>
            <person name="Rapoport G."/>
            <person name="Rey M."/>
            <person name="Reynolds S."/>
            <person name="Rieger M."/>
            <person name="Rivolta C."/>
            <person name="Rocha E."/>
            <person name="Roche B."/>
            <person name="Rose M."/>
            <person name="Sadaie Y."/>
            <person name="Sato T."/>
            <person name="Scanlan E."/>
            <person name="Schleich S."/>
            <person name="Schroeter R."/>
            <person name="Scoffone F."/>
            <person name="Sekiguchi J."/>
            <person name="Sekowska A."/>
            <person name="Seror S.J."/>
            <person name="Serror P."/>
            <person name="Shin B.-S."/>
            <person name="Soldo B."/>
            <person name="Sorokin A."/>
            <person name="Tacconi E."/>
            <person name="Takagi T."/>
            <person name="Takahashi H."/>
            <person name="Takemaru K."/>
            <person name="Takeuchi M."/>
            <person name="Tamakoshi A."/>
            <person name="Tanaka T."/>
            <person name="Terpstra P."/>
            <person name="Tognoni A."/>
            <person name="Tosato V."/>
            <person name="Uchiyama S."/>
            <person name="Vandenbol M."/>
            <person name="Vannier F."/>
            <person name="Vassarotti A."/>
            <person name="Viari A."/>
            <person name="Wambutt R."/>
            <person name="Wedler E."/>
            <person name="Wedler H."/>
            <person name="Weitzenegger T."/>
            <person name="Winters P."/>
            <person name="Wipat A."/>
            <person name="Yamamoto H."/>
            <person name="Yamane K."/>
            <person name="Yasumoto K."/>
            <person name="Yata K."/>
            <person name="Yoshida K."/>
            <person name="Yoshikawa H.-F."/>
            <person name="Zumstein E."/>
            <person name="Yoshikawa H."/>
            <person name="Danchin A."/>
        </authorList>
    </citation>
    <scope>NUCLEOTIDE SEQUENCE [LARGE SCALE GENOMIC DNA]</scope>
    <source>
        <strain>168</strain>
    </source>
</reference>
<reference key="3">
    <citation type="journal article" date="1994" name="J. Bacteriol.">
        <title>Transcriptional regulation of the Bacillus subtilis glucitol dehydrogenase gene.</title>
        <authorList>
            <person name="Ye R."/>
            <person name="Wong S.-L."/>
        </authorList>
    </citation>
    <scope>NUCLEOTIDE SEQUENCE [GENOMIC DNA] OF 1-8</scope>
    <source>
        <strain>168</strain>
    </source>
</reference>
<protein>
    <recommendedName>
        <fullName evidence="4">Sorbitol dehydrogenase</fullName>
        <shortName evidence="4">SDH</shortName>
        <ecNumber evidence="3">1.1.1.-</ecNumber>
    </recommendedName>
    <alternativeName>
        <fullName evidence="5">Glucitol dehydrogenase</fullName>
    </alternativeName>
    <alternativeName>
        <fullName evidence="7">L-iditol 2-dehydrogenase</fullName>
        <ecNumber evidence="3">1.1.1.14</ecNumber>
    </alternativeName>
    <alternativeName>
        <fullName evidence="6">Polyol dehydrogenase</fullName>
    </alternativeName>
    <alternativeName>
        <fullName evidence="7">Xylitol dehydrogenase</fullName>
        <ecNumber evidence="3">1.1.1.9</ecNumber>
    </alternativeName>
</protein>
<feature type="initiator methionine" description="Removed" evidence="3">
    <location>
        <position position="1"/>
    </location>
</feature>
<feature type="chain" id="PRO_0000160825" description="Sorbitol dehydrogenase">
    <location>
        <begin position="2"/>
        <end position="353"/>
    </location>
</feature>
<feature type="binding site" evidence="2">
    <location>
        <position position="45"/>
    </location>
    <ligand>
        <name>Zn(2+)</name>
        <dbReference type="ChEBI" id="CHEBI:29105"/>
        <note>catalytic</note>
    </ligand>
</feature>
<feature type="binding site" evidence="1">
    <location>
        <position position="51"/>
    </location>
    <ligand>
        <name>substrate</name>
    </ligand>
</feature>
<feature type="binding site" evidence="2">
    <location>
        <position position="70"/>
    </location>
    <ligand>
        <name>Zn(2+)</name>
        <dbReference type="ChEBI" id="CHEBI:29105"/>
        <note>catalytic</note>
    </ligand>
</feature>
<feature type="binding site" evidence="2">
    <location>
        <position position="71"/>
    </location>
    <ligand>
        <name>Zn(2+)</name>
        <dbReference type="ChEBI" id="CHEBI:29105"/>
        <note>catalytic</note>
    </ligand>
</feature>
<feature type="binding site" evidence="1">
    <location>
        <position position="156"/>
    </location>
    <ligand>
        <name>substrate</name>
    </ligand>
</feature>
<feature type="binding site" evidence="2">
    <location>
        <position position="184"/>
    </location>
    <ligand>
        <name>NAD(+)</name>
        <dbReference type="ChEBI" id="CHEBI:57540"/>
    </ligand>
</feature>
<feature type="binding site" evidence="2">
    <location>
        <position position="204"/>
    </location>
    <ligand>
        <name>NAD(+)</name>
        <dbReference type="ChEBI" id="CHEBI:57540"/>
    </ligand>
</feature>
<feature type="binding site" evidence="2">
    <location>
        <position position="209"/>
    </location>
    <ligand>
        <name>NAD(+)</name>
        <dbReference type="ChEBI" id="CHEBI:57540"/>
    </ligand>
</feature>
<feature type="binding site" evidence="2">
    <location>
        <begin position="271"/>
        <end position="273"/>
    </location>
    <ligand>
        <name>NAD(+)</name>
        <dbReference type="ChEBI" id="CHEBI:57540"/>
    </ligand>
</feature>
<feature type="binding site" evidence="2">
    <location>
        <begin position="296"/>
        <end position="298"/>
    </location>
    <ligand>
        <name>NAD(+)</name>
        <dbReference type="ChEBI" id="CHEBI:57540"/>
    </ligand>
</feature>
<feature type="binding site" evidence="1">
    <location>
        <position position="298"/>
    </location>
    <ligand>
        <name>substrate</name>
    </ligand>
</feature>
<feature type="binding site" evidence="1">
    <location>
        <position position="299"/>
    </location>
    <ligand>
        <name>substrate</name>
    </ligand>
</feature>
<comment type="function">
    <text evidence="3">Polyol dehydrogenase that catalyzes the NAD(+)-dependent oxidation of various sugar alcohols. Is mostly active with D-sorbitol (D-glucitol), xylitol and L-iditol as substrates, leading to the C2-oxidized products D-fructose, D-xylulose and L-sorbose, respectively.</text>
</comment>
<comment type="catalytic activity">
    <reaction evidence="3">
        <text>keto-D-fructose + NADH + H(+) = D-sorbitol + NAD(+)</text>
        <dbReference type="Rhea" id="RHEA:33031"/>
        <dbReference type="ChEBI" id="CHEBI:15378"/>
        <dbReference type="ChEBI" id="CHEBI:17924"/>
        <dbReference type="ChEBI" id="CHEBI:48095"/>
        <dbReference type="ChEBI" id="CHEBI:57540"/>
        <dbReference type="ChEBI" id="CHEBI:57945"/>
    </reaction>
</comment>
<comment type="catalytic activity">
    <reaction evidence="3">
        <text>xylitol + NAD(+) = D-xylulose + NADH + H(+)</text>
        <dbReference type="Rhea" id="RHEA:20433"/>
        <dbReference type="ChEBI" id="CHEBI:15378"/>
        <dbReference type="ChEBI" id="CHEBI:17140"/>
        <dbReference type="ChEBI" id="CHEBI:17151"/>
        <dbReference type="ChEBI" id="CHEBI:57540"/>
        <dbReference type="ChEBI" id="CHEBI:57945"/>
        <dbReference type="EC" id="1.1.1.9"/>
    </reaction>
</comment>
<comment type="catalytic activity">
    <reaction evidence="3">
        <text>L-iditol + NAD(+) = keto-L-sorbose + NADH + H(+)</text>
        <dbReference type="Rhea" id="RHEA:10160"/>
        <dbReference type="ChEBI" id="CHEBI:13172"/>
        <dbReference type="ChEBI" id="CHEBI:15378"/>
        <dbReference type="ChEBI" id="CHEBI:18202"/>
        <dbReference type="ChEBI" id="CHEBI:57540"/>
        <dbReference type="ChEBI" id="CHEBI:57945"/>
        <dbReference type="EC" id="1.1.1.14"/>
    </reaction>
</comment>
<comment type="cofactor">
    <cofactor evidence="3">
        <name>Zn(2+)</name>
        <dbReference type="ChEBI" id="CHEBI:29105"/>
    </cofactor>
    <text evidence="3">Binds 1 Zn(2+) ion per subunit.</text>
</comment>
<comment type="biophysicochemical properties">
    <kinetics>
        <KM evidence="3">11 mM for D-sorbitol</KM>
        <KM evidence="3">14 mM for xylitol</KM>
        <KM evidence="3">18 mM for L-iditol</KM>
        <KM evidence="3">125 mM for ribitol</KM>
        <KM evidence="3">500 mM for galactitol</KM>
        <KM evidence="3">555 mM for D-mannitol</KM>
    </kinetics>
</comment>
<comment type="subunit">
    <text evidence="3">Homotetramer.</text>
</comment>
<comment type="similarity">
    <text evidence="6">Belongs to the zinc-containing alcohol dehydrogenase family.</text>
</comment>
<sequence length="353" mass="38390">MTHTVPQNMKAAVMHNTREIKIETLPVPDINHDEVLIKVMAVGICGSDLHYYTNGRIGNYVVEKPFILGHECAGEIAAVGSSVDQFKVGDRVAVEPGVTCGRCEACKEGRYNLCPDVQFLATPPVDGAFVQYIKMRQDFVFLIPDSLSYEEAALIEPFSVGIHAAARTKLQPGSTIAIMGMGPVGLMAVAAAKAFGAGTIIVTDLEPLRLEAAKKMGATHIINIREQDALEEIKTITNDRGVDVAWETAGNPAALQSALASVRRGGKLAIVGLPSQNEIPLNVPFIADNEIDIYGIFRYANTYPKGIEFLASGIVDTKHLVTDQYSLEQTQDAMERALQFKNECLKVMVYPNR</sequence>
<dbReference type="EC" id="1.1.1.-" evidence="3"/>
<dbReference type="EC" id="1.1.1.14" evidence="3"/>
<dbReference type="EC" id="1.1.1.9" evidence="3"/>
<dbReference type="EMBL" id="M96947">
    <property type="protein sequence ID" value="AAA22508.1"/>
    <property type="molecule type" value="Genomic_DNA"/>
</dbReference>
<dbReference type="EMBL" id="AL009126">
    <property type="protein sequence ID" value="CAB12434.1"/>
    <property type="molecule type" value="Genomic_DNA"/>
</dbReference>
<dbReference type="EMBL" id="L16626">
    <property type="protein sequence ID" value="AAA20875.1"/>
    <property type="molecule type" value="Genomic_DNA"/>
</dbReference>
<dbReference type="PIR" id="A45052">
    <property type="entry name" value="A45052"/>
</dbReference>
<dbReference type="RefSeq" id="NP_388496.1">
    <property type="nucleotide sequence ID" value="NC_000964.3"/>
</dbReference>
<dbReference type="RefSeq" id="WP_003244156.1">
    <property type="nucleotide sequence ID" value="NZ_OZ025638.1"/>
</dbReference>
<dbReference type="SMR" id="Q06004"/>
<dbReference type="FunCoup" id="Q06004">
    <property type="interactions" value="572"/>
</dbReference>
<dbReference type="STRING" id="224308.BSU06150"/>
<dbReference type="jPOST" id="Q06004"/>
<dbReference type="PaxDb" id="224308-BSU06150"/>
<dbReference type="EnsemblBacteria" id="CAB12434">
    <property type="protein sequence ID" value="CAB12434"/>
    <property type="gene ID" value="BSU_06150"/>
</dbReference>
<dbReference type="GeneID" id="939495"/>
<dbReference type="KEGG" id="bsu:BSU06150"/>
<dbReference type="PATRIC" id="fig|224308.179.peg.666"/>
<dbReference type="eggNOG" id="COG1063">
    <property type="taxonomic scope" value="Bacteria"/>
</dbReference>
<dbReference type="InParanoid" id="Q06004"/>
<dbReference type="OrthoDB" id="9770238at2"/>
<dbReference type="PhylomeDB" id="Q06004"/>
<dbReference type="BioCyc" id="BSUB:BSU06150-MONOMER"/>
<dbReference type="BioCyc" id="MetaCyc:BSU06150-MONOMER"/>
<dbReference type="Proteomes" id="UP000001570">
    <property type="component" value="Chromosome"/>
</dbReference>
<dbReference type="GO" id="GO:0046526">
    <property type="term" value="F:D-xylulose reductase activity"/>
    <property type="evidence" value="ECO:0007669"/>
    <property type="project" value="UniProtKB-EC"/>
</dbReference>
<dbReference type="GO" id="GO:0003939">
    <property type="term" value="F:L-iditol 2-dehydrogenase (NAD+) activity"/>
    <property type="evidence" value="ECO:0007669"/>
    <property type="project" value="UniProtKB-EC"/>
</dbReference>
<dbReference type="GO" id="GO:0008270">
    <property type="term" value="F:zinc ion binding"/>
    <property type="evidence" value="ECO:0007669"/>
    <property type="project" value="InterPro"/>
</dbReference>
<dbReference type="CDD" id="cd05285">
    <property type="entry name" value="sorbitol_DH"/>
    <property type="match status" value="1"/>
</dbReference>
<dbReference type="FunFam" id="3.40.50.720:FF:000068">
    <property type="entry name" value="Sorbitol dehydrogenase"/>
    <property type="match status" value="1"/>
</dbReference>
<dbReference type="Gene3D" id="3.90.180.10">
    <property type="entry name" value="Medium-chain alcohol dehydrogenases, catalytic domain"/>
    <property type="match status" value="1"/>
</dbReference>
<dbReference type="Gene3D" id="3.40.50.720">
    <property type="entry name" value="NAD(P)-binding Rossmann-like Domain"/>
    <property type="match status" value="1"/>
</dbReference>
<dbReference type="InterPro" id="IPR013149">
    <property type="entry name" value="ADH-like_C"/>
</dbReference>
<dbReference type="InterPro" id="IPR013154">
    <property type="entry name" value="ADH-like_N"/>
</dbReference>
<dbReference type="InterPro" id="IPR002328">
    <property type="entry name" value="ADH_Zn_CS"/>
</dbReference>
<dbReference type="InterPro" id="IPR011032">
    <property type="entry name" value="GroES-like_sf"/>
</dbReference>
<dbReference type="InterPro" id="IPR036291">
    <property type="entry name" value="NAD(P)-bd_dom_sf"/>
</dbReference>
<dbReference type="InterPro" id="IPR020843">
    <property type="entry name" value="PKS_ER"/>
</dbReference>
<dbReference type="InterPro" id="IPR045306">
    <property type="entry name" value="SDH-like"/>
</dbReference>
<dbReference type="PANTHER" id="PTHR43161">
    <property type="entry name" value="SORBITOL DEHYDROGENASE"/>
    <property type="match status" value="1"/>
</dbReference>
<dbReference type="PANTHER" id="PTHR43161:SF9">
    <property type="entry name" value="SORBITOL DEHYDROGENASE"/>
    <property type="match status" value="1"/>
</dbReference>
<dbReference type="Pfam" id="PF08240">
    <property type="entry name" value="ADH_N"/>
    <property type="match status" value="1"/>
</dbReference>
<dbReference type="Pfam" id="PF00107">
    <property type="entry name" value="ADH_zinc_N"/>
    <property type="match status" value="1"/>
</dbReference>
<dbReference type="SMART" id="SM00829">
    <property type="entry name" value="PKS_ER"/>
    <property type="match status" value="1"/>
</dbReference>
<dbReference type="SUPFAM" id="SSF50129">
    <property type="entry name" value="GroES-like"/>
    <property type="match status" value="1"/>
</dbReference>
<dbReference type="SUPFAM" id="SSF51735">
    <property type="entry name" value="NAD(P)-binding Rossmann-fold domains"/>
    <property type="match status" value="1"/>
</dbReference>
<dbReference type="PROSITE" id="PS00059">
    <property type="entry name" value="ADH_ZINC"/>
    <property type="match status" value="1"/>
</dbReference>
<gene>
    <name evidence="4" type="primary">gutB</name>
    <name type="ordered locus">BSU06150</name>
</gene>
<name>DHSO_BACSU</name>
<keyword id="KW-0903">Direct protein sequencing</keyword>
<keyword id="KW-0479">Metal-binding</keyword>
<keyword id="KW-0520">NAD</keyword>
<keyword id="KW-0560">Oxidoreductase</keyword>
<keyword id="KW-1185">Reference proteome</keyword>
<keyword id="KW-0862">Zinc</keyword>
<evidence type="ECO:0000250" key="1">
    <source>
        <dbReference type="UniProtKB" id="P07846"/>
    </source>
</evidence>
<evidence type="ECO:0000250" key="2">
    <source>
        <dbReference type="UniProtKB" id="Q00796"/>
    </source>
</evidence>
<evidence type="ECO:0000269" key="3">
    <source>
    </source>
</evidence>
<evidence type="ECO:0000303" key="4">
    <source>
    </source>
</evidence>
<evidence type="ECO:0000303" key="5">
    <source>
    </source>
</evidence>
<evidence type="ECO:0000305" key="6"/>
<evidence type="ECO:0000305" key="7">
    <source>
    </source>
</evidence>